<evidence type="ECO:0000255" key="1">
    <source>
        <dbReference type="HAMAP-Rule" id="MF_01630"/>
    </source>
</evidence>
<dbReference type="EC" id="1.9.6.1" evidence="1"/>
<dbReference type="EMBL" id="CP000272">
    <property type="protein sequence ID" value="ABE36274.1"/>
    <property type="molecule type" value="Genomic_DNA"/>
</dbReference>
<dbReference type="RefSeq" id="WP_011493534.1">
    <property type="nucleotide sequence ID" value="NC_007953.1"/>
</dbReference>
<dbReference type="SMR" id="Q13I15"/>
<dbReference type="STRING" id="266265.Bxe_C0367"/>
<dbReference type="KEGG" id="bxb:DR64_8074"/>
<dbReference type="KEGG" id="bxe:Bxe_C0367"/>
<dbReference type="PATRIC" id="fig|266265.5.peg.8136"/>
<dbReference type="eggNOG" id="COG0243">
    <property type="taxonomic scope" value="Bacteria"/>
</dbReference>
<dbReference type="OrthoDB" id="7376058at2"/>
<dbReference type="Proteomes" id="UP000001817">
    <property type="component" value="Chromosome 3"/>
</dbReference>
<dbReference type="GO" id="GO:0016020">
    <property type="term" value="C:membrane"/>
    <property type="evidence" value="ECO:0007669"/>
    <property type="project" value="TreeGrafter"/>
</dbReference>
<dbReference type="GO" id="GO:0009325">
    <property type="term" value="C:nitrate reductase complex"/>
    <property type="evidence" value="ECO:0007669"/>
    <property type="project" value="TreeGrafter"/>
</dbReference>
<dbReference type="GO" id="GO:0042597">
    <property type="term" value="C:periplasmic space"/>
    <property type="evidence" value="ECO:0007669"/>
    <property type="project" value="UniProtKB-SubCell"/>
</dbReference>
<dbReference type="GO" id="GO:0051539">
    <property type="term" value="F:4 iron, 4 sulfur cluster binding"/>
    <property type="evidence" value="ECO:0007669"/>
    <property type="project" value="UniProtKB-KW"/>
</dbReference>
<dbReference type="GO" id="GO:0009055">
    <property type="term" value="F:electron transfer activity"/>
    <property type="evidence" value="ECO:0007669"/>
    <property type="project" value="UniProtKB-UniRule"/>
</dbReference>
<dbReference type="GO" id="GO:0005506">
    <property type="term" value="F:iron ion binding"/>
    <property type="evidence" value="ECO:0007669"/>
    <property type="project" value="UniProtKB-UniRule"/>
</dbReference>
<dbReference type="GO" id="GO:0030151">
    <property type="term" value="F:molybdenum ion binding"/>
    <property type="evidence" value="ECO:0007669"/>
    <property type="project" value="InterPro"/>
</dbReference>
<dbReference type="GO" id="GO:0043546">
    <property type="term" value="F:molybdopterin cofactor binding"/>
    <property type="evidence" value="ECO:0007669"/>
    <property type="project" value="InterPro"/>
</dbReference>
<dbReference type="GO" id="GO:0050140">
    <property type="term" value="F:nitrate reductase (cytochrome) activity"/>
    <property type="evidence" value="ECO:0007669"/>
    <property type="project" value="UniProtKB-EC"/>
</dbReference>
<dbReference type="GO" id="GO:0045333">
    <property type="term" value="P:cellular respiration"/>
    <property type="evidence" value="ECO:0007669"/>
    <property type="project" value="UniProtKB-ARBA"/>
</dbReference>
<dbReference type="GO" id="GO:0006777">
    <property type="term" value="P:Mo-molybdopterin cofactor biosynthetic process"/>
    <property type="evidence" value="ECO:0007669"/>
    <property type="project" value="UniProtKB-UniRule"/>
</dbReference>
<dbReference type="GO" id="GO:0042128">
    <property type="term" value="P:nitrate assimilation"/>
    <property type="evidence" value="ECO:0007669"/>
    <property type="project" value="UniProtKB-UniRule"/>
</dbReference>
<dbReference type="CDD" id="cd02791">
    <property type="entry name" value="MopB_CT_Nitrate-R-NapA-like"/>
    <property type="match status" value="1"/>
</dbReference>
<dbReference type="CDD" id="cd02754">
    <property type="entry name" value="MopB_Nitrate-R-NapA-like"/>
    <property type="match status" value="1"/>
</dbReference>
<dbReference type="FunFam" id="2.40.40.20:FF:000005">
    <property type="entry name" value="Periplasmic nitrate reductase"/>
    <property type="match status" value="1"/>
</dbReference>
<dbReference type="Gene3D" id="2.40.40.20">
    <property type="match status" value="1"/>
</dbReference>
<dbReference type="Gene3D" id="3.30.200.210">
    <property type="match status" value="1"/>
</dbReference>
<dbReference type="Gene3D" id="3.40.50.740">
    <property type="match status" value="1"/>
</dbReference>
<dbReference type="Gene3D" id="3.40.228.10">
    <property type="entry name" value="Dimethylsulfoxide Reductase, domain 2"/>
    <property type="match status" value="1"/>
</dbReference>
<dbReference type="HAMAP" id="MF_01630">
    <property type="entry name" value="Nitrate_reduct_NapA"/>
    <property type="match status" value="1"/>
</dbReference>
<dbReference type="InterPro" id="IPR009010">
    <property type="entry name" value="Asp_de-COase-like_dom_sf"/>
</dbReference>
<dbReference type="InterPro" id="IPR041957">
    <property type="entry name" value="CT_Nitrate-R-NapA-like"/>
</dbReference>
<dbReference type="InterPro" id="IPR006657">
    <property type="entry name" value="MoPterin_dinucl-bd_dom"/>
</dbReference>
<dbReference type="InterPro" id="IPR006656">
    <property type="entry name" value="Mopterin_OxRdtase"/>
</dbReference>
<dbReference type="InterPro" id="IPR006963">
    <property type="entry name" value="Mopterin_OxRdtase_4Fe-4S_dom"/>
</dbReference>
<dbReference type="InterPro" id="IPR027467">
    <property type="entry name" value="MopterinOxRdtase_cofactor_BS"/>
</dbReference>
<dbReference type="InterPro" id="IPR010051">
    <property type="entry name" value="Periplasm_NO3_reductase_lsu"/>
</dbReference>
<dbReference type="InterPro" id="IPR050123">
    <property type="entry name" value="Prok_molybdopt-oxidoreductase"/>
</dbReference>
<dbReference type="InterPro" id="IPR006311">
    <property type="entry name" value="TAT_signal"/>
</dbReference>
<dbReference type="InterPro" id="IPR019546">
    <property type="entry name" value="TAT_signal_bac_arc"/>
</dbReference>
<dbReference type="NCBIfam" id="TIGR01706">
    <property type="entry name" value="NAPA"/>
    <property type="match status" value="1"/>
</dbReference>
<dbReference type="NCBIfam" id="NF010055">
    <property type="entry name" value="PRK13532.1"/>
    <property type="match status" value="1"/>
</dbReference>
<dbReference type="NCBIfam" id="TIGR01409">
    <property type="entry name" value="TAT_signal_seq"/>
    <property type="match status" value="1"/>
</dbReference>
<dbReference type="PANTHER" id="PTHR43105:SF11">
    <property type="entry name" value="PERIPLASMIC NITRATE REDUCTASE"/>
    <property type="match status" value="1"/>
</dbReference>
<dbReference type="PANTHER" id="PTHR43105">
    <property type="entry name" value="RESPIRATORY NITRATE REDUCTASE"/>
    <property type="match status" value="1"/>
</dbReference>
<dbReference type="Pfam" id="PF04879">
    <property type="entry name" value="Molybdop_Fe4S4"/>
    <property type="match status" value="1"/>
</dbReference>
<dbReference type="Pfam" id="PF00384">
    <property type="entry name" value="Molybdopterin"/>
    <property type="match status" value="1"/>
</dbReference>
<dbReference type="Pfam" id="PF01568">
    <property type="entry name" value="Molydop_binding"/>
    <property type="match status" value="1"/>
</dbReference>
<dbReference type="SMART" id="SM00926">
    <property type="entry name" value="Molybdop_Fe4S4"/>
    <property type="match status" value="1"/>
</dbReference>
<dbReference type="SUPFAM" id="SSF50692">
    <property type="entry name" value="ADC-like"/>
    <property type="match status" value="1"/>
</dbReference>
<dbReference type="SUPFAM" id="SSF53706">
    <property type="entry name" value="Formate dehydrogenase/DMSO reductase, domains 1-3"/>
    <property type="match status" value="1"/>
</dbReference>
<dbReference type="PROSITE" id="PS51669">
    <property type="entry name" value="4FE4S_MOW_BIS_MGD"/>
    <property type="match status" value="1"/>
</dbReference>
<dbReference type="PROSITE" id="PS00551">
    <property type="entry name" value="MOLYBDOPTERIN_PROK_1"/>
    <property type="match status" value="1"/>
</dbReference>
<dbReference type="PROSITE" id="PS51318">
    <property type="entry name" value="TAT"/>
    <property type="match status" value="1"/>
</dbReference>
<sequence length="827" mass="92597">MTLSRRAFIKQTAAATAASAAGVVLPGVDALAASDSLTWSKAPCRFCGTGCGVSVGVKNGKVVATQGDPQAEVNRGLNCVKGYFLSKIMYGQDRLTTPLLRMKDGKYAKDGEFAPVSWDQAFDVMADHFKRTLKEKGPTAVGMFGSGQWTVWEGYAAVKLMKAGFRSNNLDPNARHCMASAVTGFMRTFGMDEPMGCYDDIEQADTFVLWGSNMSEMHPILWTRITDRRLSTPTTRVVVLSTFEHRSFDLADQTIIFTPQSDLAILNYIANYIIRNGNVNRDFVNRHTVFKQGNADIGYGLRPDNPLQKTARNAGDPNGSQPITFDEFAKFVSKYDAAYVTKLSGVPQNKLDQLARLYADPKVKVMSFWTMGFNQHTRGTWANNMVYNLHLLTGKIATPGNSPFSLTGQPSACGTAREVGTFSHRLPADMVVTNPKHREEAEHIWKLPAGTIPDKPGYHAVLQNRMLRDGKLNAYWVQVNNNVQAAANINGEALPGYRNPQAFVVVSDVYPTVTAVAADLILPSAMWVEKEGAYGNAERRTQFWHQLVDAPAGARSDLWQLVEFSKRFKVEEVWPADLLAKKPEYRGKTLYDVLYRNGQVDRFALTETDSHYRNDEAKAFGFYIQKGLFEEYASFGRGHGHDLAPFDAYHKARGLRWPVVNGKETRWRYKEGSDPYVKTGTGWQFYGNPDGRAVIYALPYEPPPEVPDKEYPFWLATGRVLEHWHSGSMTRRVPELYRAFPNAVCFMHPDDAKAMGVRRGVEVKVMSRRGYILTRVETRGRDKPPRGLVFVPWFDSSQLINKVTLDATDPISLQTDYKKCAVKIVKV</sequence>
<reference key="1">
    <citation type="journal article" date="2006" name="Proc. Natl. Acad. Sci. U.S.A.">
        <title>Burkholderia xenovorans LB400 harbors a multi-replicon, 9.73-Mbp genome shaped for versatility.</title>
        <authorList>
            <person name="Chain P.S.G."/>
            <person name="Denef V.J."/>
            <person name="Konstantinidis K.T."/>
            <person name="Vergez L.M."/>
            <person name="Agullo L."/>
            <person name="Reyes V.L."/>
            <person name="Hauser L."/>
            <person name="Cordova M."/>
            <person name="Gomez L."/>
            <person name="Gonzalez M."/>
            <person name="Land M."/>
            <person name="Lao V."/>
            <person name="Larimer F."/>
            <person name="LiPuma J.J."/>
            <person name="Mahenthiralingam E."/>
            <person name="Malfatti S.A."/>
            <person name="Marx C.J."/>
            <person name="Parnell J.J."/>
            <person name="Ramette A."/>
            <person name="Richardson P."/>
            <person name="Seeger M."/>
            <person name="Smith D."/>
            <person name="Spilker T."/>
            <person name="Sul W.J."/>
            <person name="Tsoi T.V."/>
            <person name="Ulrich L.E."/>
            <person name="Zhulin I.B."/>
            <person name="Tiedje J.M."/>
        </authorList>
    </citation>
    <scope>NUCLEOTIDE SEQUENCE [LARGE SCALE GENOMIC DNA]</scope>
    <source>
        <strain>LB400</strain>
    </source>
</reference>
<gene>
    <name evidence="1" type="primary">napA</name>
    <name type="ordered locus">Bxeno_C0346</name>
    <name type="ORF">Bxe_C0367</name>
</gene>
<name>NAPA_PARXL</name>
<protein>
    <recommendedName>
        <fullName evidence="1">Periplasmic nitrate reductase</fullName>
        <ecNumber evidence="1">1.9.6.1</ecNumber>
    </recommendedName>
</protein>
<comment type="function">
    <text evidence="1">Catalytic subunit of the periplasmic nitrate reductase complex NapAB. Receives electrons from NapB and catalyzes the reduction of nitrate to nitrite.</text>
</comment>
<comment type="catalytic activity">
    <reaction evidence="1">
        <text>2 Fe(II)-[cytochrome] + nitrate + 2 H(+) = 2 Fe(III)-[cytochrome] + nitrite + H2O</text>
        <dbReference type="Rhea" id="RHEA:12909"/>
        <dbReference type="Rhea" id="RHEA-COMP:11777"/>
        <dbReference type="Rhea" id="RHEA-COMP:11778"/>
        <dbReference type="ChEBI" id="CHEBI:15377"/>
        <dbReference type="ChEBI" id="CHEBI:15378"/>
        <dbReference type="ChEBI" id="CHEBI:16301"/>
        <dbReference type="ChEBI" id="CHEBI:17632"/>
        <dbReference type="ChEBI" id="CHEBI:29033"/>
        <dbReference type="ChEBI" id="CHEBI:29034"/>
        <dbReference type="EC" id="1.9.6.1"/>
    </reaction>
</comment>
<comment type="cofactor">
    <cofactor evidence="1">
        <name>[4Fe-4S] cluster</name>
        <dbReference type="ChEBI" id="CHEBI:49883"/>
    </cofactor>
    <text evidence="1">Binds 1 [4Fe-4S] cluster.</text>
</comment>
<comment type="cofactor">
    <cofactor evidence="1">
        <name>Mo-bis(molybdopterin guanine dinucleotide)</name>
        <dbReference type="ChEBI" id="CHEBI:60539"/>
    </cofactor>
    <text evidence="1">Binds 1 molybdenum-bis(molybdopterin guanine dinucleotide) (Mo-bis-MGD) cofactor per subunit.</text>
</comment>
<comment type="subunit">
    <text evidence="1">Component of the periplasmic nitrate reductase NapAB complex composed of NapA and NapB.</text>
</comment>
<comment type="subcellular location">
    <subcellularLocation>
        <location evidence="1">Periplasm</location>
    </subcellularLocation>
</comment>
<comment type="PTM">
    <text evidence="1">Predicted to be exported by the Tat system. The position of the signal peptide cleavage has not been experimentally proven.</text>
</comment>
<comment type="similarity">
    <text evidence="1">Belongs to the prokaryotic molybdopterin-containing oxidoreductase family. NasA/NapA/NarB subfamily.</text>
</comment>
<proteinExistence type="inferred from homology"/>
<keyword id="KW-0004">4Fe-4S</keyword>
<keyword id="KW-0249">Electron transport</keyword>
<keyword id="KW-0408">Iron</keyword>
<keyword id="KW-0411">Iron-sulfur</keyword>
<keyword id="KW-0479">Metal-binding</keyword>
<keyword id="KW-0500">Molybdenum</keyword>
<keyword id="KW-0534">Nitrate assimilation</keyword>
<keyword id="KW-0560">Oxidoreductase</keyword>
<keyword id="KW-0574">Periplasm</keyword>
<keyword id="KW-1185">Reference proteome</keyword>
<keyword id="KW-0732">Signal</keyword>
<keyword id="KW-0813">Transport</keyword>
<accession>Q13I15</accession>
<organism>
    <name type="scientific">Paraburkholderia xenovorans (strain LB400)</name>
    <dbReference type="NCBI Taxonomy" id="266265"/>
    <lineage>
        <taxon>Bacteria</taxon>
        <taxon>Pseudomonadati</taxon>
        <taxon>Pseudomonadota</taxon>
        <taxon>Betaproteobacteria</taxon>
        <taxon>Burkholderiales</taxon>
        <taxon>Burkholderiaceae</taxon>
        <taxon>Paraburkholderia</taxon>
    </lineage>
</organism>
<feature type="signal peptide" description="Tat-type signal" evidence="1">
    <location>
        <begin position="1"/>
        <end position="32"/>
    </location>
</feature>
<feature type="chain" id="PRO_0000256070" description="Periplasmic nitrate reductase" evidence="1">
    <location>
        <begin position="33"/>
        <end position="827"/>
    </location>
</feature>
<feature type="domain" description="4Fe-4S Mo/W bis-MGD-type" evidence="1">
    <location>
        <begin position="37"/>
        <end position="93"/>
    </location>
</feature>
<feature type="binding site" evidence="1">
    <location>
        <position position="44"/>
    </location>
    <ligand>
        <name>[4Fe-4S] cluster</name>
        <dbReference type="ChEBI" id="CHEBI:49883"/>
    </ligand>
</feature>
<feature type="binding site" evidence="1">
    <location>
        <position position="47"/>
    </location>
    <ligand>
        <name>[4Fe-4S] cluster</name>
        <dbReference type="ChEBI" id="CHEBI:49883"/>
    </ligand>
</feature>
<feature type="binding site" evidence="1">
    <location>
        <position position="51"/>
    </location>
    <ligand>
        <name>[4Fe-4S] cluster</name>
        <dbReference type="ChEBI" id="CHEBI:49883"/>
    </ligand>
</feature>
<feature type="binding site" evidence="1">
    <location>
        <position position="79"/>
    </location>
    <ligand>
        <name>[4Fe-4S] cluster</name>
        <dbReference type="ChEBI" id="CHEBI:49883"/>
    </ligand>
</feature>
<feature type="binding site" evidence="1">
    <location>
        <position position="81"/>
    </location>
    <ligand>
        <name>Mo-bis(molybdopterin guanine dinucleotide)</name>
        <dbReference type="ChEBI" id="CHEBI:60539"/>
    </ligand>
</feature>
<feature type="binding site" evidence="1">
    <location>
        <position position="148"/>
    </location>
    <ligand>
        <name>Mo-bis(molybdopterin guanine dinucleotide)</name>
        <dbReference type="ChEBI" id="CHEBI:60539"/>
    </ligand>
</feature>
<feature type="binding site" evidence="1">
    <location>
        <position position="173"/>
    </location>
    <ligand>
        <name>Mo-bis(molybdopterin guanine dinucleotide)</name>
        <dbReference type="ChEBI" id="CHEBI:60539"/>
    </ligand>
</feature>
<feature type="binding site" evidence="1">
    <location>
        <position position="177"/>
    </location>
    <ligand>
        <name>Mo-bis(molybdopterin guanine dinucleotide)</name>
        <dbReference type="ChEBI" id="CHEBI:60539"/>
    </ligand>
</feature>
<feature type="binding site" evidence="1">
    <location>
        <begin position="241"/>
        <end position="245"/>
    </location>
    <ligand>
        <name>Mo-bis(molybdopterin guanine dinucleotide)</name>
        <dbReference type="ChEBI" id="CHEBI:60539"/>
    </ligand>
</feature>
<feature type="binding site" evidence="1">
    <location>
        <begin position="260"/>
        <end position="262"/>
    </location>
    <ligand>
        <name>Mo-bis(molybdopterin guanine dinucleotide)</name>
        <dbReference type="ChEBI" id="CHEBI:60539"/>
    </ligand>
</feature>
<feature type="binding site" evidence="1">
    <location>
        <position position="371"/>
    </location>
    <ligand>
        <name>Mo-bis(molybdopterin guanine dinucleotide)</name>
        <dbReference type="ChEBI" id="CHEBI:60539"/>
    </ligand>
</feature>
<feature type="binding site" evidence="1">
    <location>
        <position position="375"/>
    </location>
    <ligand>
        <name>Mo-bis(molybdopterin guanine dinucleotide)</name>
        <dbReference type="ChEBI" id="CHEBI:60539"/>
    </ligand>
</feature>
<feature type="binding site" evidence="1">
    <location>
        <position position="481"/>
    </location>
    <ligand>
        <name>Mo-bis(molybdopterin guanine dinucleotide)</name>
        <dbReference type="ChEBI" id="CHEBI:60539"/>
    </ligand>
</feature>
<feature type="binding site" evidence="1">
    <location>
        <begin position="507"/>
        <end position="508"/>
    </location>
    <ligand>
        <name>Mo-bis(molybdopterin guanine dinucleotide)</name>
        <dbReference type="ChEBI" id="CHEBI:60539"/>
    </ligand>
</feature>
<feature type="binding site" evidence="1">
    <location>
        <position position="530"/>
    </location>
    <ligand>
        <name>Mo-bis(molybdopterin guanine dinucleotide)</name>
        <dbReference type="ChEBI" id="CHEBI:60539"/>
    </ligand>
</feature>
<feature type="binding site" evidence="1">
    <location>
        <position position="557"/>
    </location>
    <ligand>
        <name>Mo-bis(molybdopterin guanine dinucleotide)</name>
        <dbReference type="ChEBI" id="CHEBI:60539"/>
    </ligand>
</feature>
<feature type="binding site" evidence="1">
    <location>
        <begin position="717"/>
        <end position="726"/>
    </location>
    <ligand>
        <name>Mo-bis(molybdopterin guanine dinucleotide)</name>
        <dbReference type="ChEBI" id="CHEBI:60539"/>
    </ligand>
</feature>
<feature type="binding site" evidence="1">
    <location>
        <position position="793"/>
    </location>
    <ligand>
        <name>substrate</name>
    </ligand>
</feature>
<feature type="binding site" evidence="1">
    <location>
        <position position="801"/>
    </location>
    <ligand>
        <name>Mo-bis(molybdopterin guanine dinucleotide)</name>
        <dbReference type="ChEBI" id="CHEBI:60539"/>
    </ligand>
</feature>
<feature type="binding site" evidence="1">
    <location>
        <position position="818"/>
    </location>
    <ligand>
        <name>Mo-bis(molybdopterin guanine dinucleotide)</name>
        <dbReference type="ChEBI" id="CHEBI:60539"/>
    </ligand>
</feature>